<comment type="function">
    <text evidence="1">Catalyzes the condensation of the acetyl group of acetyl-CoA with 3-methyl-2-oxobutanoate (2-ketoisovalerate) to form 3-carboxy-3-hydroxy-4-methylpentanoate (2-isopropylmalate).</text>
</comment>
<comment type="catalytic activity">
    <reaction evidence="1">
        <text>3-methyl-2-oxobutanoate + acetyl-CoA + H2O = (2S)-2-isopropylmalate + CoA + H(+)</text>
        <dbReference type="Rhea" id="RHEA:21524"/>
        <dbReference type="ChEBI" id="CHEBI:1178"/>
        <dbReference type="ChEBI" id="CHEBI:11851"/>
        <dbReference type="ChEBI" id="CHEBI:15377"/>
        <dbReference type="ChEBI" id="CHEBI:15378"/>
        <dbReference type="ChEBI" id="CHEBI:57287"/>
        <dbReference type="ChEBI" id="CHEBI:57288"/>
        <dbReference type="EC" id="2.3.3.13"/>
    </reaction>
</comment>
<comment type="cofactor">
    <cofactor evidence="1">
        <name>Mg(2+)</name>
        <dbReference type="ChEBI" id="CHEBI:18420"/>
    </cofactor>
</comment>
<comment type="pathway">
    <text evidence="1">Amino-acid biosynthesis; L-leucine biosynthesis; L-leucine from 3-methyl-2-oxobutanoate: step 1/4.</text>
</comment>
<comment type="subunit">
    <text evidence="1">Homodimer.</text>
</comment>
<comment type="subcellular location">
    <subcellularLocation>
        <location evidence="1">Cytoplasm</location>
    </subcellularLocation>
</comment>
<comment type="similarity">
    <text evidence="1">Belongs to the alpha-IPM synthase/homocitrate synthase family. LeuA type 2 subfamily.</text>
</comment>
<comment type="sequence caution" evidence="2">
    <conflict type="erroneous initiation">
        <sequence resource="EMBL-CDS" id="AAG07179"/>
    </conflict>
    <text>Extended N-terminus.</text>
</comment>
<protein>
    <recommendedName>
        <fullName evidence="1">2-isopropylmalate synthase</fullName>
        <ecNumber evidence="1">2.3.3.13</ecNumber>
    </recommendedName>
    <alternativeName>
        <fullName evidence="1">Alpha-IPM synthase</fullName>
    </alternativeName>
    <alternativeName>
        <fullName evidence="1">Alpha-isopropylmalate synthase</fullName>
    </alternativeName>
</protein>
<sequence>MSMLKDPSQKYRPFSAINLPDRTWPSKTITEVPIWCSSDLRDGNQSLIEPMDAAKKMRFFKTLVQVGLKQIEVAFPSASDTDFNFVRELIEGNHIPDDVTIQVLTQAREDLITRTFESLRGAKKAIVHVYNATAPSFRRIVFNQDKQGVVDIATNAAKLIKKLAAEQPETQWSFQYSPEIFSSTELEFSVEVCNAVIDVWQPTPDNKIILNLPATVECATPNVYADQIEWFGRHVDKRDSVIISLHTHNDRGTGVAATELGLMAGADRVEGCLFGNGERTGNVDLVTLALNMYTQGLHPQLDFSDIDAVRKVVEECNQLPVHPRHPYVGDLVHTAFSGSHQDAIRKGFAQQKEDAIWEVPYLPIDPADIGRDYEAVIRVNSQSGKGGITFLLEQEYGISLPRRMQIEFSQVVQGETDRLGLEMTAQQIYSLLENEYLKATSPYVLASHRLQEENGTSAVDLEVSFDGEKQHWRGIGKGPLEALVAALPVKAEIMDYHEHAIGAGANAKAAAYIEIRLEGQRPLHGIGIDENITTASFRALFSALNRAVTQAEAKAA</sequence>
<reference key="1">
    <citation type="journal article" date="2000" name="Nature">
        <title>Complete genome sequence of Pseudomonas aeruginosa PAO1, an opportunistic pathogen.</title>
        <authorList>
            <person name="Stover C.K."/>
            <person name="Pham X.-Q.T."/>
            <person name="Erwin A.L."/>
            <person name="Mizoguchi S.D."/>
            <person name="Warrener P."/>
            <person name="Hickey M.J."/>
            <person name="Brinkman F.S.L."/>
            <person name="Hufnagle W.O."/>
            <person name="Kowalik D.J."/>
            <person name="Lagrou M."/>
            <person name="Garber R.L."/>
            <person name="Goltry L."/>
            <person name="Tolentino E."/>
            <person name="Westbrock-Wadman S."/>
            <person name="Yuan Y."/>
            <person name="Brody L.L."/>
            <person name="Coulter S.N."/>
            <person name="Folger K.R."/>
            <person name="Kas A."/>
            <person name="Larbig K."/>
            <person name="Lim R.M."/>
            <person name="Smith K.A."/>
            <person name="Spencer D.H."/>
            <person name="Wong G.K.-S."/>
            <person name="Wu Z."/>
            <person name="Paulsen I.T."/>
            <person name="Reizer J."/>
            <person name="Saier M.H. Jr."/>
            <person name="Hancock R.E.W."/>
            <person name="Lory S."/>
            <person name="Olson M.V."/>
        </authorList>
    </citation>
    <scope>NUCLEOTIDE SEQUENCE [LARGE SCALE GENOMIC DNA]</scope>
    <source>
        <strain>ATCC 15692 / DSM 22644 / CIP 104116 / JCM 14847 / LMG 12228 / 1C / PRS 101 / PAO1</strain>
    </source>
</reference>
<accession>Q9HXK5</accession>
<evidence type="ECO:0000255" key="1">
    <source>
        <dbReference type="HAMAP-Rule" id="MF_00572"/>
    </source>
</evidence>
<evidence type="ECO:0000305" key="2"/>
<feature type="chain" id="PRO_0000140437" description="2-isopropylmalate synthase">
    <location>
        <begin position="1"/>
        <end position="556"/>
    </location>
</feature>
<feature type="domain" description="Pyruvate carboxyltransferase" evidence="1">
    <location>
        <begin position="33"/>
        <end position="307"/>
    </location>
</feature>
<feature type="region of interest" description="Regulatory domain" evidence="1">
    <location>
        <begin position="439"/>
        <end position="556"/>
    </location>
</feature>
<feature type="binding site" evidence="1">
    <location>
        <position position="42"/>
    </location>
    <ligand>
        <name>Mg(2+)</name>
        <dbReference type="ChEBI" id="CHEBI:18420"/>
    </ligand>
</feature>
<feature type="binding site" evidence="1">
    <location>
        <position position="246"/>
    </location>
    <ligand>
        <name>Mg(2+)</name>
        <dbReference type="ChEBI" id="CHEBI:18420"/>
    </ligand>
</feature>
<feature type="binding site" evidence="1">
    <location>
        <position position="248"/>
    </location>
    <ligand>
        <name>Mg(2+)</name>
        <dbReference type="ChEBI" id="CHEBI:18420"/>
    </ligand>
</feature>
<feature type="binding site" evidence="1">
    <location>
        <position position="282"/>
    </location>
    <ligand>
        <name>Mg(2+)</name>
        <dbReference type="ChEBI" id="CHEBI:18420"/>
    </ligand>
</feature>
<dbReference type="EC" id="2.3.3.13" evidence="1"/>
<dbReference type="EMBL" id="AE004091">
    <property type="protein sequence ID" value="AAG07179.1"/>
    <property type="status" value="ALT_INIT"/>
    <property type="molecule type" value="Genomic_DNA"/>
</dbReference>
<dbReference type="PIR" id="C83170">
    <property type="entry name" value="C83170"/>
</dbReference>
<dbReference type="RefSeq" id="NP_252481.3">
    <property type="nucleotide sequence ID" value="NC_002516.2"/>
</dbReference>
<dbReference type="RefSeq" id="WP_003113805.1">
    <property type="nucleotide sequence ID" value="NZ_QZGE01000001.1"/>
</dbReference>
<dbReference type="RefSeq" id="WP_010895664.1">
    <property type="nucleotide sequence ID" value="NC_002516.2"/>
</dbReference>
<dbReference type="SMR" id="Q9HXK5"/>
<dbReference type="STRING" id="208964.PA3792"/>
<dbReference type="PaxDb" id="208964-PA3792"/>
<dbReference type="GeneID" id="879941"/>
<dbReference type="KEGG" id="pae:PA3792"/>
<dbReference type="PATRIC" id="fig|208964.12.peg.3971"/>
<dbReference type="PseudoCAP" id="PA3792"/>
<dbReference type="HOGENOM" id="CLU_004588_3_0_6"/>
<dbReference type="InParanoid" id="Q9HXK5"/>
<dbReference type="OrthoDB" id="9803573at2"/>
<dbReference type="PhylomeDB" id="Q9HXK5"/>
<dbReference type="UniPathway" id="UPA00048">
    <property type="reaction ID" value="UER00070"/>
</dbReference>
<dbReference type="Proteomes" id="UP000002438">
    <property type="component" value="Chromosome"/>
</dbReference>
<dbReference type="GO" id="GO:0005737">
    <property type="term" value="C:cytoplasm"/>
    <property type="evidence" value="ECO:0007669"/>
    <property type="project" value="UniProtKB-SubCell"/>
</dbReference>
<dbReference type="GO" id="GO:0003852">
    <property type="term" value="F:2-isopropylmalate synthase activity"/>
    <property type="evidence" value="ECO:0007669"/>
    <property type="project" value="UniProtKB-UniRule"/>
</dbReference>
<dbReference type="GO" id="GO:0003985">
    <property type="term" value="F:acetyl-CoA C-acetyltransferase activity"/>
    <property type="evidence" value="ECO:0007669"/>
    <property type="project" value="UniProtKB-UniRule"/>
</dbReference>
<dbReference type="GO" id="GO:0000287">
    <property type="term" value="F:magnesium ion binding"/>
    <property type="evidence" value="ECO:0007669"/>
    <property type="project" value="UniProtKB-UniRule"/>
</dbReference>
<dbReference type="GO" id="GO:0009098">
    <property type="term" value="P:L-leucine biosynthetic process"/>
    <property type="evidence" value="ECO:0007669"/>
    <property type="project" value="UniProtKB-UniRule"/>
</dbReference>
<dbReference type="CDD" id="cd07942">
    <property type="entry name" value="DRE_TIM_LeuA"/>
    <property type="match status" value="1"/>
</dbReference>
<dbReference type="FunFam" id="3.20.20.70:FF:000045">
    <property type="entry name" value="2-isopropylmalate synthase"/>
    <property type="match status" value="1"/>
</dbReference>
<dbReference type="FunFam" id="3.30.160.270:FF:000006">
    <property type="entry name" value="2-isopropylmalate synthase"/>
    <property type="match status" value="1"/>
</dbReference>
<dbReference type="Gene3D" id="3.30.160.270">
    <property type="match status" value="1"/>
</dbReference>
<dbReference type="Gene3D" id="3.20.20.70">
    <property type="entry name" value="Aldolase class I"/>
    <property type="match status" value="1"/>
</dbReference>
<dbReference type="HAMAP" id="MF_00572">
    <property type="entry name" value="LeuA_type2"/>
    <property type="match status" value="1"/>
</dbReference>
<dbReference type="InterPro" id="IPR013709">
    <property type="entry name" value="2-isopropylmalate_synth_dimer"/>
</dbReference>
<dbReference type="InterPro" id="IPR002034">
    <property type="entry name" value="AIPM/Hcit_synth_CS"/>
</dbReference>
<dbReference type="InterPro" id="IPR013785">
    <property type="entry name" value="Aldolase_TIM"/>
</dbReference>
<dbReference type="InterPro" id="IPR005668">
    <property type="entry name" value="IPM_Synthase"/>
</dbReference>
<dbReference type="InterPro" id="IPR054692">
    <property type="entry name" value="LeuA-like_post-cat"/>
</dbReference>
<dbReference type="InterPro" id="IPR036230">
    <property type="entry name" value="LeuA_allosteric_dom_sf"/>
</dbReference>
<dbReference type="InterPro" id="IPR039371">
    <property type="entry name" value="LeuA_N_DRE-TIM"/>
</dbReference>
<dbReference type="InterPro" id="IPR000891">
    <property type="entry name" value="PYR_CT"/>
</dbReference>
<dbReference type="NCBIfam" id="TIGR00970">
    <property type="entry name" value="leuA_yeast"/>
    <property type="match status" value="1"/>
</dbReference>
<dbReference type="NCBIfam" id="NF002991">
    <property type="entry name" value="PRK03739.1"/>
    <property type="match status" value="1"/>
</dbReference>
<dbReference type="PANTHER" id="PTHR46911">
    <property type="match status" value="1"/>
</dbReference>
<dbReference type="PANTHER" id="PTHR46911:SF1">
    <property type="entry name" value="2-ISOPROPYLMALATE SYNTHASE"/>
    <property type="match status" value="1"/>
</dbReference>
<dbReference type="Pfam" id="PF00682">
    <property type="entry name" value="HMGL-like"/>
    <property type="match status" value="1"/>
</dbReference>
<dbReference type="Pfam" id="PF22615">
    <property type="entry name" value="IPMS_D2"/>
    <property type="match status" value="1"/>
</dbReference>
<dbReference type="Pfam" id="PF08502">
    <property type="entry name" value="LeuA_dimer"/>
    <property type="match status" value="1"/>
</dbReference>
<dbReference type="SMART" id="SM00917">
    <property type="entry name" value="LeuA_dimer"/>
    <property type="match status" value="1"/>
</dbReference>
<dbReference type="SUPFAM" id="SSF110921">
    <property type="entry name" value="2-isopropylmalate synthase LeuA, allosteric (dimerisation) domain"/>
    <property type="match status" value="1"/>
</dbReference>
<dbReference type="SUPFAM" id="SSF51569">
    <property type="entry name" value="Aldolase"/>
    <property type="match status" value="1"/>
</dbReference>
<dbReference type="SUPFAM" id="SSF89000">
    <property type="entry name" value="post-HMGL domain-like"/>
    <property type="match status" value="1"/>
</dbReference>
<dbReference type="PROSITE" id="PS00815">
    <property type="entry name" value="AIPM_HOMOCIT_SYNTH_1"/>
    <property type="match status" value="1"/>
</dbReference>
<dbReference type="PROSITE" id="PS00816">
    <property type="entry name" value="AIPM_HOMOCIT_SYNTH_2"/>
    <property type="match status" value="1"/>
</dbReference>
<dbReference type="PROSITE" id="PS50991">
    <property type="entry name" value="PYR_CT"/>
    <property type="match status" value="1"/>
</dbReference>
<gene>
    <name evidence="1" type="primary">leuA</name>
    <name type="ordered locus">PA3792</name>
</gene>
<name>LEU1_PSEAE</name>
<keyword id="KW-0028">Amino-acid biosynthesis</keyword>
<keyword id="KW-0100">Branched-chain amino acid biosynthesis</keyword>
<keyword id="KW-0963">Cytoplasm</keyword>
<keyword id="KW-0432">Leucine biosynthesis</keyword>
<keyword id="KW-0460">Magnesium</keyword>
<keyword id="KW-0479">Metal-binding</keyword>
<keyword id="KW-1185">Reference proteome</keyword>
<keyword id="KW-0808">Transferase</keyword>
<proteinExistence type="inferred from homology"/>
<organism>
    <name type="scientific">Pseudomonas aeruginosa (strain ATCC 15692 / DSM 22644 / CIP 104116 / JCM 14847 / LMG 12228 / 1C / PRS 101 / PAO1)</name>
    <dbReference type="NCBI Taxonomy" id="208964"/>
    <lineage>
        <taxon>Bacteria</taxon>
        <taxon>Pseudomonadati</taxon>
        <taxon>Pseudomonadota</taxon>
        <taxon>Gammaproteobacteria</taxon>
        <taxon>Pseudomonadales</taxon>
        <taxon>Pseudomonadaceae</taxon>
        <taxon>Pseudomonas</taxon>
    </lineage>
</organism>